<organism>
    <name type="scientific">Oryza sativa subsp. indica</name>
    <name type="common">Rice</name>
    <dbReference type="NCBI Taxonomy" id="39946"/>
    <lineage>
        <taxon>Eukaryota</taxon>
        <taxon>Viridiplantae</taxon>
        <taxon>Streptophyta</taxon>
        <taxon>Embryophyta</taxon>
        <taxon>Tracheophyta</taxon>
        <taxon>Spermatophyta</taxon>
        <taxon>Magnoliopsida</taxon>
        <taxon>Liliopsida</taxon>
        <taxon>Poales</taxon>
        <taxon>Poaceae</taxon>
        <taxon>BOP clade</taxon>
        <taxon>Oryzoideae</taxon>
        <taxon>Oryzeae</taxon>
        <taxon>Oryzinae</taxon>
        <taxon>Oryza</taxon>
        <taxon>Oryza sativa</taxon>
    </lineage>
</organism>
<accession>A2Y9M4</accession>
<accession>O24206</accession>
<accession>Q40739</accession>
<accession>Q5WA90</accession>
<accession>Q7Y044</accession>
<sequence>MATAAGMGIGAACLVAPQVRPGRRLRLQRVRRRCVAELSRDGGSAQRPLAPAPLVKQPVLPTFLVPTSTPPAPTQSPAPAPTPPPLPDSGVGEIEPDLEGLTEDSIDKTIFVASEQESEIMDVKEQAQAKVTRSVVFVTGEASPYAKSGGLGDVCGSLPIALALRGHRVMVVMPRYMNGALNKNFANAFYTEKHIKIPCFGGEHEVTFFHEYRDSVDWVFVDHPSYHRPGNLYGDNFGAFGDNQFRYTLLCYAACEAPLILELGGYIYGQKCMFVVNDWHASLVPVLLAAKYRPYGVYRDARSVLVIHNLAHQGVEPASTYPDLGLPPEWYGALEWVFPEWARRHALDKGEAVNFLKGAVVTADRIVTVSQGYSWEVTTAEGGQGLNELLSSRKSVLNGIVNGIDINDWNPSTDKFLPYHYSVDDLSGKAKCKAELQEELGLPIRPDVPLIGFIGRLDYQKGIDLIKLAIPDLMRDNIQFVMLGSGDPGFEGWMRSTESGYRDKFRGWVGFSVPVSHRITAGCDILLMPSRFEPCGLNQLYAMQYGTVPVVHGTGGLRDTVENFNPFAEKGEQGTGWAFSPLTIEKMLWALRMAISTYREHKSSWEGLMKRGMSSDFTWDHAASQYEQIFEWAFMDQPYVM</sequence>
<gene>
    <name type="ORF">OsI_021017</name>
</gene>
<protein>
    <recommendedName>
        <fullName>Soluble starch synthase 1, chloroplastic/amyloplastic</fullName>
        <ecNumber>2.4.1.21</ecNumber>
    </recommendedName>
    <alternativeName>
        <fullName>SSS 1</fullName>
    </alternativeName>
    <alternativeName>
        <fullName>Starch synthase I</fullName>
    </alternativeName>
</protein>
<evidence type="ECO:0000250" key="1"/>
<evidence type="ECO:0000256" key="2">
    <source>
        <dbReference type="SAM" id="MobiDB-lite"/>
    </source>
</evidence>
<evidence type="ECO:0000305" key="3"/>
<proteinExistence type="evidence at transcript level"/>
<keyword id="KW-0035">Amyloplast</keyword>
<keyword id="KW-0150">Chloroplast</keyword>
<keyword id="KW-0328">Glycosyltransferase</keyword>
<keyword id="KW-0934">Plastid</keyword>
<keyword id="KW-1185">Reference proteome</keyword>
<keyword id="KW-0750">Starch biosynthesis</keyword>
<keyword id="KW-0808">Transferase</keyword>
<keyword id="KW-0809">Transit peptide</keyword>
<reference key="1">
    <citation type="submission" date="2003-05" db="EMBL/GenBank/DDBJ databases">
        <title>Oryza sativa (indica cultivar-group) putative soluble starch synthase I gene.</title>
        <authorList>
            <person name="Jiang H.W."/>
            <person name="Dian W.M."/>
            <person name="Wu P."/>
        </authorList>
    </citation>
    <scope>NUCLEOTIDE SEQUENCE [MRNA]</scope>
</reference>
<reference key="2">
    <citation type="journal article" date="2005" name="PLoS Biol.">
        <title>The genomes of Oryza sativa: a history of duplications.</title>
        <authorList>
            <person name="Yu J."/>
            <person name="Wang J."/>
            <person name="Lin W."/>
            <person name="Li S."/>
            <person name="Li H."/>
            <person name="Zhou J."/>
            <person name="Ni P."/>
            <person name="Dong W."/>
            <person name="Hu S."/>
            <person name="Zeng C."/>
            <person name="Zhang J."/>
            <person name="Zhang Y."/>
            <person name="Li R."/>
            <person name="Xu Z."/>
            <person name="Li S."/>
            <person name="Li X."/>
            <person name="Zheng H."/>
            <person name="Cong L."/>
            <person name="Lin L."/>
            <person name="Yin J."/>
            <person name="Geng J."/>
            <person name="Li G."/>
            <person name="Shi J."/>
            <person name="Liu J."/>
            <person name="Lv H."/>
            <person name="Li J."/>
            <person name="Wang J."/>
            <person name="Deng Y."/>
            <person name="Ran L."/>
            <person name="Shi X."/>
            <person name="Wang X."/>
            <person name="Wu Q."/>
            <person name="Li C."/>
            <person name="Ren X."/>
            <person name="Wang J."/>
            <person name="Wang X."/>
            <person name="Li D."/>
            <person name="Liu D."/>
            <person name="Zhang X."/>
            <person name="Ji Z."/>
            <person name="Zhao W."/>
            <person name="Sun Y."/>
            <person name="Zhang Z."/>
            <person name="Bao J."/>
            <person name="Han Y."/>
            <person name="Dong L."/>
            <person name="Ji J."/>
            <person name="Chen P."/>
            <person name="Wu S."/>
            <person name="Liu J."/>
            <person name="Xiao Y."/>
            <person name="Bu D."/>
            <person name="Tan J."/>
            <person name="Yang L."/>
            <person name="Ye C."/>
            <person name="Zhang J."/>
            <person name="Xu J."/>
            <person name="Zhou Y."/>
            <person name="Yu Y."/>
            <person name="Zhang B."/>
            <person name="Zhuang S."/>
            <person name="Wei H."/>
            <person name="Liu B."/>
            <person name="Lei M."/>
            <person name="Yu H."/>
            <person name="Li Y."/>
            <person name="Xu H."/>
            <person name="Wei S."/>
            <person name="He X."/>
            <person name="Fang L."/>
            <person name="Zhang Z."/>
            <person name="Zhang Y."/>
            <person name="Huang X."/>
            <person name="Su Z."/>
            <person name="Tong W."/>
            <person name="Li J."/>
            <person name="Tong Z."/>
            <person name="Li S."/>
            <person name="Ye J."/>
            <person name="Wang L."/>
            <person name="Fang L."/>
            <person name="Lei T."/>
            <person name="Chen C.-S."/>
            <person name="Chen H.-C."/>
            <person name="Xu Z."/>
            <person name="Li H."/>
            <person name="Huang H."/>
            <person name="Zhang F."/>
            <person name="Xu H."/>
            <person name="Li N."/>
            <person name="Zhao C."/>
            <person name="Li S."/>
            <person name="Dong L."/>
            <person name="Huang Y."/>
            <person name="Li L."/>
            <person name="Xi Y."/>
            <person name="Qi Q."/>
            <person name="Li W."/>
            <person name="Zhang B."/>
            <person name="Hu W."/>
            <person name="Zhang Y."/>
            <person name="Tian X."/>
            <person name="Jiao Y."/>
            <person name="Liang X."/>
            <person name="Jin J."/>
            <person name="Gao L."/>
            <person name="Zheng W."/>
            <person name="Hao B."/>
            <person name="Liu S.-M."/>
            <person name="Wang W."/>
            <person name="Yuan L."/>
            <person name="Cao M."/>
            <person name="McDermott J."/>
            <person name="Samudrala R."/>
            <person name="Wang J."/>
            <person name="Wong G.K.-S."/>
            <person name="Yang H."/>
        </authorList>
    </citation>
    <scope>NUCLEOTIDE SEQUENCE [LARGE SCALE GENOMIC DNA]</scope>
    <source>
        <strain>cv. 93-11</strain>
    </source>
</reference>
<feature type="transit peptide" description="Chloroplast" evidence="1">
    <location>
        <begin position="1"/>
        <end position="113"/>
    </location>
</feature>
<feature type="chain" id="PRO_0000295650" description="Soluble starch synthase 1, chloroplastic/amyloplastic">
    <location>
        <begin position="114"/>
        <end position="641"/>
    </location>
</feature>
<feature type="region of interest" description="Disordered" evidence="2">
    <location>
        <begin position="62"/>
        <end position="96"/>
    </location>
</feature>
<feature type="compositionally biased region" description="Pro residues" evidence="2">
    <location>
        <begin position="68"/>
        <end position="87"/>
    </location>
</feature>
<feature type="binding site" evidence="1">
    <location>
        <position position="147"/>
    </location>
    <ligand>
        <name>ADP-alpha-D-glucose</name>
        <dbReference type="ChEBI" id="CHEBI:57498"/>
    </ligand>
</feature>
<comment type="catalytic activity">
    <reaction>
        <text>[(1-&gt;4)-alpha-D-glucosyl](n) + ADP-alpha-D-glucose = [(1-&gt;4)-alpha-D-glucosyl](n+1) + ADP + H(+)</text>
        <dbReference type="Rhea" id="RHEA:18189"/>
        <dbReference type="Rhea" id="RHEA-COMP:9584"/>
        <dbReference type="Rhea" id="RHEA-COMP:9587"/>
        <dbReference type="ChEBI" id="CHEBI:15378"/>
        <dbReference type="ChEBI" id="CHEBI:15444"/>
        <dbReference type="ChEBI" id="CHEBI:57498"/>
        <dbReference type="ChEBI" id="CHEBI:456216"/>
        <dbReference type="EC" id="2.4.1.21"/>
    </reaction>
</comment>
<comment type="pathway">
    <text>Glycan biosynthesis; starch biosynthesis.</text>
</comment>
<comment type="subcellular location">
    <subcellularLocation>
        <location>Plastid</location>
        <location>Chloroplast</location>
    </subcellularLocation>
    <subcellularLocation>
        <location>Plastid</location>
        <location>Amyloplast</location>
    </subcellularLocation>
    <text evidence="3">Amyloplast or chloroplast, soluble.</text>
</comment>
<comment type="miscellaneous">
    <text>Three forms of soluble starch synthase were purified: RSS1, RSS2 and RSS3.</text>
</comment>
<comment type="similarity">
    <text evidence="3">Belongs to the glycosyltransferase 1 family. Bacterial/plant glycogen synthase subfamily.</text>
</comment>
<name>SSY1_ORYSI</name>
<dbReference type="EC" id="2.4.1.21"/>
<dbReference type="EMBL" id="AY299404">
    <property type="protein sequence ID" value="AAP56350.1"/>
    <property type="molecule type" value="mRNA"/>
</dbReference>
<dbReference type="EMBL" id="CM000131">
    <property type="protein sequence ID" value="EAY99784.1"/>
    <property type="molecule type" value="Genomic_DNA"/>
</dbReference>
<dbReference type="SMR" id="A2Y9M4"/>
<dbReference type="STRING" id="39946.A2Y9M4"/>
<dbReference type="CAZy" id="GT5">
    <property type="family name" value="Glycosyltransferase Family 5"/>
</dbReference>
<dbReference type="EnsemblPlants" id="BGIOSGA021860-TA">
    <property type="protein sequence ID" value="BGIOSGA021860-PA"/>
    <property type="gene ID" value="BGIOSGA021860"/>
</dbReference>
<dbReference type="Gramene" id="BGIOSGA021860-TA">
    <property type="protein sequence ID" value="BGIOSGA021860-PA"/>
    <property type="gene ID" value="BGIOSGA021860"/>
</dbReference>
<dbReference type="HOGENOM" id="CLU_009583_18_2_1"/>
<dbReference type="OMA" id="TWCPWYM"/>
<dbReference type="UniPathway" id="UPA00152"/>
<dbReference type="Proteomes" id="UP000007015">
    <property type="component" value="Chromosome 6"/>
</dbReference>
<dbReference type="ExpressionAtlas" id="A2Y9M4">
    <property type="expression patterns" value="differential"/>
</dbReference>
<dbReference type="GO" id="GO:0009501">
    <property type="term" value="C:amyloplast"/>
    <property type="evidence" value="ECO:0007669"/>
    <property type="project" value="UniProtKB-SubCell"/>
</dbReference>
<dbReference type="GO" id="GO:0009507">
    <property type="term" value="C:chloroplast"/>
    <property type="evidence" value="ECO:0007669"/>
    <property type="project" value="UniProtKB-SubCell"/>
</dbReference>
<dbReference type="GO" id="GO:0009011">
    <property type="term" value="F:alpha-1,4-glucan glucosyltransferase (ADP-glucose donor) activity"/>
    <property type="evidence" value="ECO:0007669"/>
    <property type="project" value="UniProtKB-EC"/>
</dbReference>
<dbReference type="GO" id="GO:0004373">
    <property type="term" value="F:alpha-1,4-glucan glucosyltransferase (UDP-glucose donor) activity"/>
    <property type="evidence" value="ECO:0007669"/>
    <property type="project" value="InterPro"/>
</dbReference>
<dbReference type="GO" id="GO:0019252">
    <property type="term" value="P:starch biosynthetic process"/>
    <property type="evidence" value="ECO:0007669"/>
    <property type="project" value="UniProtKB-UniPathway"/>
</dbReference>
<dbReference type="CDD" id="cd03791">
    <property type="entry name" value="GT5_Glycogen_synthase_DULL1-like"/>
    <property type="match status" value="1"/>
</dbReference>
<dbReference type="FunFam" id="3.40.50.2000:FF:000048">
    <property type="entry name" value="Starch synthase, chloroplastic/amyloplastic"/>
    <property type="match status" value="1"/>
</dbReference>
<dbReference type="Gene3D" id="3.40.50.2000">
    <property type="entry name" value="Glycogen Phosphorylase B"/>
    <property type="match status" value="2"/>
</dbReference>
<dbReference type="HAMAP" id="MF_00484">
    <property type="entry name" value="Glycogen_synth"/>
    <property type="match status" value="1"/>
</dbReference>
<dbReference type="InterPro" id="IPR001296">
    <property type="entry name" value="Glyco_trans_1"/>
</dbReference>
<dbReference type="InterPro" id="IPR011835">
    <property type="entry name" value="GS/SS"/>
</dbReference>
<dbReference type="InterPro" id="IPR013534">
    <property type="entry name" value="Starch_synth_cat_dom"/>
</dbReference>
<dbReference type="NCBIfam" id="TIGR02095">
    <property type="entry name" value="glgA"/>
    <property type="match status" value="1"/>
</dbReference>
<dbReference type="PANTHER" id="PTHR45825:SF11">
    <property type="entry name" value="ALPHA AMYLASE DOMAIN-CONTAINING PROTEIN"/>
    <property type="match status" value="1"/>
</dbReference>
<dbReference type="PANTHER" id="PTHR45825">
    <property type="entry name" value="GRANULE-BOUND STARCH SYNTHASE 1, CHLOROPLASTIC/AMYLOPLASTIC"/>
    <property type="match status" value="1"/>
</dbReference>
<dbReference type="Pfam" id="PF08323">
    <property type="entry name" value="Glyco_transf_5"/>
    <property type="match status" value="1"/>
</dbReference>
<dbReference type="Pfam" id="PF00534">
    <property type="entry name" value="Glycos_transf_1"/>
    <property type="match status" value="1"/>
</dbReference>
<dbReference type="SUPFAM" id="SSF53756">
    <property type="entry name" value="UDP-Glycosyltransferase/glycogen phosphorylase"/>
    <property type="match status" value="1"/>
</dbReference>